<feature type="chain" id="PRO_0000074694" description="Signal transduction histidine-protein kinase ArlS">
    <location>
        <begin position="1"/>
        <end position="451"/>
    </location>
</feature>
<feature type="transmembrane region" description="Helical" evidence="2">
    <location>
        <begin position="11"/>
        <end position="31"/>
    </location>
</feature>
<feature type="transmembrane region" description="Helical" evidence="2">
    <location>
        <begin position="156"/>
        <end position="176"/>
    </location>
</feature>
<feature type="domain" description="HAMP" evidence="3">
    <location>
        <begin position="178"/>
        <end position="231"/>
    </location>
</feature>
<feature type="domain" description="Histidine kinase" evidence="4">
    <location>
        <begin position="239"/>
        <end position="451"/>
    </location>
</feature>
<feature type="modified residue" description="Phosphohistidine; by autocatalysis" evidence="4">
    <location>
        <position position="242"/>
    </location>
</feature>
<accession>Q7A0W5</accession>
<comment type="function">
    <text evidence="1">Member of the two-component regulatory system ArlS/ArlR involved in the regulation of adhesion, autolysis, multidrug resistance and virulence. ArlS probably functions as a sensor protein kinase which is autophosphorylated at a histidine residue and transfers its phosphate group to ArlR (By similarity).</text>
</comment>
<comment type="catalytic activity">
    <reaction>
        <text>ATP + protein L-histidine = ADP + protein N-phospho-L-histidine.</text>
        <dbReference type="EC" id="2.7.13.3"/>
    </reaction>
</comment>
<comment type="subcellular location">
    <subcellularLocation>
        <location evidence="1">Cell membrane</location>
        <topology evidence="1">Multi-pass membrane protein</topology>
    </subcellularLocation>
</comment>
<comment type="PTM">
    <text evidence="1">Autophosphorylated.</text>
</comment>
<protein>
    <recommendedName>
        <fullName>Signal transduction histidine-protein kinase ArlS</fullName>
        <ecNumber>2.7.13.3</ecNumber>
    </recommendedName>
</protein>
<evidence type="ECO:0000250" key="1"/>
<evidence type="ECO:0000255" key="2"/>
<evidence type="ECO:0000255" key="3">
    <source>
        <dbReference type="PROSITE-ProRule" id="PRU00102"/>
    </source>
</evidence>
<evidence type="ECO:0000255" key="4">
    <source>
        <dbReference type="PROSITE-ProRule" id="PRU00107"/>
    </source>
</evidence>
<organism>
    <name type="scientific">Staphylococcus aureus (strain MW2)</name>
    <dbReference type="NCBI Taxonomy" id="196620"/>
    <lineage>
        <taxon>Bacteria</taxon>
        <taxon>Bacillati</taxon>
        <taxon>Bacillota</taxon>
        <taxon>Bacilli</taxon>
        <taxon>Bacillales</taxon>
        <taxon>Staphylococcaceae</taxon>
        <taxon>Staphylococcus</taxon>
    </lineage>
</organism>
<reference key="1">
    <citation type="journal article" date="2002" name="Lancet">
        <title>Genome and virulence determinants of high virulence community-acquired MRSA.</title>
        <authorList>
            <person name="Baba T."/>
            <person name="Takeuchi F."/>
            <person name="Kuroda M."/>
            <person name="Yuzawa H."/>
            <person name="Aoki K."/>
            <person name="Oguchi A."/>
            <person name="Nagai Y."/>
            <person name="Iwama N."/>
            <person name="Asano K."/>
            <person name="Naimi T."/>
            <person name="Kuroda H."/>
            <person name="Cui L."/>
            <person name="Yamamoto K."/>
            <person name="Hiramatsu K."/>
        </authorList>
    </citation>
    <scope>NUCLEOTIDE SEQUENCE [LARGE SCALE GENOMIC DNA]</scope>
    <source>
        <strain>MW2</strain>
    </source>
</reference>
<name>ARLS_STAAW</name>
<sequence>MTKRKLRNNWIIVTTMITFVTIFLFCLIIIFFLKDTLHNSELDDAERSSSDINNLFHSKPVKDISALDLNASLGNFQEIIIYDEHNNKLFETSNDNTVRVEPGYEHRYFDRVIKKRYKGIEYLIIKEPITTQDFKGYSLLIHSLENYDNIVKSLYIIALAFGVIATIITATISYVFSTQITKPLVSLSNKMIEIRRDGFQNKLQLNTNYEEIDNLANTFNEMMSQIEESFNQQRQFVEDASHELRTPLQIIQGHLNLIQRWGKKDPAVLEESLNISIEEMNRIIKLVEELLELTKGDVNDISSEAQTVHINDEIRSRIHSLKQLHPDYQFDTDLTSKNLEIKMKPHQFEQLFLIFIDNAIKYDVKNKKIKVKTRLKNKQKIIEITDHGIGIPEEDQDFIFDRFYRVDKSRSRSQGGNGLGLSIAQKIIQLNGGSIKIKSEINKGTTFKIIF</sequence>
<keyword id="KW-0067">ATP-binding</keyword>
<keyword id="KW-1003">Cell membrane</keyword>
<keyword id="KW-0418">Kinase</keyword>
<keyword id="KW-0472">Membrane</keyword>
<keyword id="KW-0547">Nucleotide-binding</keyword>
<keyword id="KW-0597">Phosphoprotein</keyword>
<keyword id="KW-0808">Transferase</keyword>
<keyword id="KW-0812">Transmembrane</keyword>
<keyword id="KW-1133">Transmembrane helix</keyword>
<keyword id="KW-0902">Two-component regulatory system</keyword>
<keyword id="KW-0843">Virulence</keyword>
<gene>
    <name type="primary">arlS</name>
    <name type="ordered locus">MW1304</name>
</gene>
<proteinExistence type="inferred from homology"/>
<dbReference type="EC" id="2.7.13.3"/>
<dbReference type="EMBL" id="BA000033">
    <property type="protein sequence ID" value="BAB95169.1"/>
    <property type="molecule type" value="Genomic_DNA"/>
</dbReference>
<dbReference type="RefSeq" id="WP_000166801.1">
    <property type="nucleotide sequence ID" value="NC_003923.1"/>
</dbReference>
<dbReference type="SMR" id="Q7A0W5"/>
<dbReference type="CARD" id="ARO:3000839">
    <property type="molecule name" value="arlS"/>
    <property type="mechanism identifier" value="ARO:0010000"/>
    <property type="mechanism name" value="antibiotic efflux"/>
</dbReference>
<dbReference type="KEGG" id="sam:MW1304"/>
<dbReference type="HOGENOM" id="CLU_000445_89_6_9"/>
<dbReference type="GO" id="GO:0005886">
    <property type="term" value="C:plasma membrane"/>
    <property type="evidence" value="ECO:0007669"/>
    <property type="project" value="UniProtKB-SubCell"/>
</dbReference>
<dbReference type="GO" id="GO:0005524">
    <property type="term" value="F:ATP binding"/>
    <property type="evidence" value="ECO:0007669"/>
    <property type="project" value="UniProtKB-KW"/>
</dbReference>
<dbReference type="GO" id="GO:0000155">
    <property type="term" value="F:phosphorelay sensor kinase activity"/>
    <property type="evidence" value="ECO:0007669"/>
    <property type="project" value="InterPro"/>
</dbReference>
<dbReference type="CDD" id="cd00075">
    <property type="entry name" value="HATPase"/>
    <property type="match status" value="1"/>
</dbReference>
<dbReference type="CDD" id="cd00082">
    <property type="entry name" value="HisKA"/>
    <property type="match status" value="1"/>
</dbReference>
<dbReference type="FunFam" id="3.30.565.10:FF:000006">
    <property type="entry name" value="Sensor histidine kinase WalK"/>
    <property type="match status" value="1"/>
</dbReference>
<dbReference type="FunFam" id="1.10.287.130:FF:000001">
    <property type="entry name" value="Two-component sensor histidine kinase"/>
    <property type="match status" value="1"/>
</dbReference>
<dbReference type="Gene3D" id="1.10.287.130">
    <property type="match status" value="1"/>
</dbReference>
<dbReference type="Gene3D" id="6.10.340.10">
    <property type="match status" value="1"/>
</dbReference>
<dbReference type="Gene3D" id="3.30.565.10">
    <property type="entry name" value="Histidine kinase-like ATPase, C-terminal domain"/>
    <property type="match status" value="1"/>
</dbReference>
<dbReference type="InterPro" id="IPR041610">
    <property type="entry name" value="ArlS_N"/>
</dbReference>
<dbReference type="InterPro" id="IPR050398">
    <property type="entry name" value="Bact_Sensor_His_Kinase"/>
</dbReference>
<dbReference type="InterPro" id="IPR003660">
    <property type="entry name" value="HAMP_dom"/>
</dbReference>
<dbReference type="InterPro" id="IPR036890">
    <property type="entry name" value="HATPase_C_sf"/>
</dbReference>
<dbReference type="InterPro" id="IPR005467">
    <property type="entry name" value="His_kinase_dom"/>
</dbReference>
<dbReference type="InterPro" id="IPR003661">
    <property type="entry name" value="HisK_dim/P_dom"/>
</dbReference>
<dbReference type="InterPro" id="IPR036097">
    <property type="entry name" value="HisK_dim/P_sf"/>
</dbReference>
<dbReference type="InterPro" id="IPR004358">
    <property type="entry name" value="Sig_transdc_His_kin-like_C"/>
</dbReference>
<dbReference type="PANTHER" id="PTHR45528:SF12">
    <property type="entry name" value="SENSOR HISTIDINE KINASE ARSS"/>
    <property type="match status" value="1"/>
</dbReference>
<dbReference type="PANTHER" id="PTHR45528">
    <property type="entry name" value="SENSOR HISTIDINE KINASE CPXA"/>
    <property type="match status" value="1"/>
</dbReference>
<dbReference type="Pfam" id="PF18719">
    <property type="entry name" value="ArlS_N"/>
    <property type="match status" value="1"/>
</dbReference>
<dbReference type="Pfam" id="PF02518">
    <property type="entry name" value="HATPase_c"/>
    <property type="match status" value="1"/>
</dbReference>
<dbReference type="Pfam" id="PF00512">
    <property type="entry name" value="HisKA"/>
    <property type="match status" value="1"/>
</dbReference>
<dbReference type="PRINTS" id="PR00344">
    <property type="entry name" value="BCTRLSENSOR"/>
</dbReference>
<dbReference type="SMART" id="SM00387">
    <property type="entry name" value="HATPase_c"/>
    <property type="match status" value="1"/>
</dbReference>
<dbReference type="SMART" id="SM00388">
    <property type="entry name" value="HisKA"/>
    <property type="match status" value="1"/>
</dbReference>
<dbReference type="SUPFAM" id="SSF55874">
    <property type="entry name" value="ATPase domain of HSP90 chaperone/DNA topoisomerase II/histidine kinase"/>
    <property type="match status" value="1"/>
</dbReference>
<dbReference type="SUPFAM" id="SSF158472">
    <property type="entry name" value="HAMP domain-like"/>
    <property type="match status" value="1"/>
</dbReference>
<dbReference type="SUPFAM" id="SSF47384">
    <property type="entry name" value="Homodimeric domain of signal transducing histidine kinase"/>
    <property type="match status" value="1"/>
</dbReference>
<dbReference type="PROSITE" id="PS50885">
    <property type="entry name" value="HAMP"/>
    <property type="match status" value="1"/>
</dbReference>
<dbReference type="PROSITE" id="PS50109">
    <property type="entry name" value="HIS_KIN"/>
    <property type="match status" value="1"/>
</dbReference>